<protein>
    <recommendedName>
        <fullName evidence="1">Global transcriptional regulator CodY</fullName>
    </recommendedName>
</protein>
<reference key="1">
    <citation type="submission" date="2007-05" db="EMBL/GenBank/DDBJ databases">
        <title>Complete sequence of chromosome of Staphylococcus aureus subsp. aureus JH9.</title>
        <authorList>
            <consortium name="US DOE Joint Genome Institute"/>
            <person name="Copeland A."/>
            <person name="Lucas S."/>
            <person name="Lapidus A."/>
            <person name="Barry K."/>
            <person name="Detter J.C."/>
            <person name="Glavina del Rio T."/>
            <person name="Hammon N."/>
            <person name="Israni S."/>
            <person name="Pitluck S."/>
            <person name="Chain P."/>
            <person name="Malfatti S."/>
            <person name="Shin M."/>
            <person name="Vergez L."/>
            <person name="Schmutz J."/>
            <person name="Larimer F."/>
            <person name="Land M."/>
            <person name="Hauser L."/>
            <person name="Kyrpides N."/>
            <person name="Kim E."/>
            <person name="Tomasz A."/>
            <person name="Richardson P."/>
        </authorList>
    </citation>
    <scope>NUCLEOTIDE SEQUENCE [LARGE SCALE GENOMIC DNA]</scope>
    <source>
        <strain>JH9</strain>
    </source>
</reference>
<accession>A5ISD9</accession>
<dbReference type="EMBL" id="CP000703">
    <property type="protein sequence ID" value="ABQ49112.1"/>
    <property type="molecule type" value="Genomic_DNA"/>
</dbReference>
<dbReference type="RefSeq" id="WP_000055337.1">
    <property type="nucleotide sequence ID" value="NC_009487.1"/>
</dbReference>
<dbReference type="SMR" id="A5ISD9"/>
<dbReference type="KEGG" id="saj:SaurJH9_1315"/>
<dbReference type="HOGENOM" id="CLU_089581_0_0_9"/>
<dbReference type="GO" id="GO:0005737">
    <property type="term" value="C:cytoplasm"/>
    <property type="evidence" value="ECO:0007669"/>
    <property type="project" value="UniProtKB-SubCell"/>
</dbReference>
<dbReference type="GO" id="GO:0003677">
    <property type="term" value="F:DNA binding"/>
    <property type="evidence" value="ECO:0007669"/>
    <property type="project" value="UniProtKB-UniRule"/>
</dbReference>
<dbReference type="GO" id="GO:0003700">
    <property type="term" value="F:DNA-binding transcription factor activity"/>
    <property type="evidence" value="ECO:0007669"/>
    <property type="project" value="InterPro"/>
</dbReference>
<dbReference type="GO" id="GO:0005525">
    <property type="term" value="F:GTP binding"/>
    <property type="evidence" value="ECO:0007669"/>
    <property type="project" value="InterPro"/>
</dbReference>
<dbReference type="GO" id="GO:0045892">
    <property type="term" value="P:negative regulation of DNA-templated transcription"/>
    <property type="evidence" value="ECO:0007669"/>
    <property type="project" value="UniProtKB-UniRule"/>
</dbReference>
<dbReference type="FunFam" id="1.10.10.10:FF:000034">
    <property type="entry name" value="GTP-sensing transcriptional pleiotropic repressor CodY"/>
    <property type="match status" value="1"/>
</dbReference>
<dbReference type="FunFam" id="3.30.450.40:FF:000003">
    <property type="entry name" value="GTP-sensing transcriptional pleiotropic repressor CodY"/>
    <property type="match status" value="1"/>
</dbReference>
<dbReference type="Gene3D" id="3.30.450.40">
    <property type="match status" value="1"/>
</dbReference>
<dbReference type="Gene3D" id="1.10.10.10">
    <property type="entry name" value="Winged helix-like DNA-binding domain superfamily/Winged helix DNA-binding domain"/>
    <property type="match status" value="1"/>
</dbReference>
<dbReference type="HAMAP" id="MF_00621">
    <property type="entry name" value="HTH_type_CodY"/>
    <property type="match status" value="1"/>
</dbReference>
<dbReference type="InterPro" id="IPR014154">
    <property type="entry name" value="CodY"/>
</dbReference>
<dbReference type="InterPro" id="IPR029016">
    <property type="entry name" value="GAF-like_dom_sf"/>
</dbReference>
<dbReference type="InterPro" id="IPR013198">
    <property type="entry name" value="GTP_trans_reg_CodY_C"/>
</dbReference>
<dbReference type="InterPro" id="IPR010312">
    <property type="entry name" value="Transc_reg_CodY_N"/>
</dbReference>
<dbReference type="InterPro" id="IPR036388">
    <property type="entry name" value="WH-like_DNA-bd_sf"/>
</dbReference>
<dbReference type="InterPro" id="IPR036390">
    <property type="entry name" value="WH_DNA-bd_sf"/>
</dbReference>
<dbReference type="NCBIfam" id="TIGR02787">
    <property type="entry name" value="codY_Gpos"/>
    <property type="match status" value="1"/>
</dbReference>
<dbReference type="NCBIfam" id="NF003170">
    <property type="entry name" value="PRK04158.1"/>
    <property type="match status" value="1"/>
</dbReference>
<dbReference type="PANTHER" id="PTHR40062:SF1">
    <property type="entry name" value="GLOBAL TRANSCRIPTIONAL REGULATOR CODY"/>
    <property type="match status" value="1"/>
</dbReference>
<dbReference type="PANTHER" id="PTHR40062">
    <property type="entry name" value="GTP-SENSING TRANSCRIPTIONAL PLEIOTROPIC REPRESSOR CODY"/>
    <property type="match status" value="1"/>
</dbReference>
<dbReference type="Pfam" id="PF06018">
    <property type="entry name" value="CodY"/>
    <property type="match status" value="1"/>
</dbReference>
<dbReference type="Pfam" id="PF08222">
    <property type="entry name" value="HTH_CodY"/>
    <property type="match status" value="1"/>
</dbReference>
<dbReference type="PIRSF" id="PIRSF011572">
    <property type="entry name" value="GTP_sensing_CodY"/>
    <property type="match status" value="1"/>
</dbReference>
<dbReference type="SUPFAM" id="SSF46785">
    <property type="entry name" value="Winged helix' DNA-binding domain"/>
    <property type="match status" value="1"/>
</dbReference>
<comment type="function">
    <text evidence="1">DNA-binding global transcriptional regulator which is involved in the adaptive response to starvation and acts by directly or indirectly controlling the expression of numerous genes in response to nutrient availability. During rapid exponential growth, CodY is highly active and represses genes whose products allow adaptation to nutrient depletion.</text>
</comment>
<comment type="subcellular location">
    <subcellularLocation>
        <location evidence="1">Cytoplasm</location>
    </subcellularLocation>
</comment>
<comment type="similarity">
    <text evidence="1">Belongs to the CodY family.</text>
</comment>
<sequence>MSLLSKTRELNTLLQKHKGIAVDFKDVAQTISSVTVTNVFIVSRRGKILGSSLNELLKSQRIIQMLEERHIPSEYTERLMEVKQTESNIDIDNVLTVFPPENRELFIDSRTTIFPILGGGERLGTLVLGRVHDDFNENDLVLGEYAATVIGMEILREKHSEVEKEARDKAAITMAINSLSYSEKEAIEHIFEELGGTEGLLIASKVADRVGITRSVIVNALRKLESAGVIESRSLGMKGTFIKVKKEKFLDELEKSK</sequence>
<evidence type="ECO:0000255" key="1">
    <source>
        <dbReference type="HAMAP-Rule" id="MF_00621"/>
    </source>
</evidence>
<organism>
    <name type="scientific">Staphylococcus aureus (strain JH9)</name>
    <dbReference type="NCBI Taxonomy" id="359786"/>
    <lineage>
        <taxon>Bacteria</taxon>
        <taxon>Bacillati</taxon>
        <taxon>Bacillota</taxon>
        <taxon>Bacilli</taxon>
        <taxon>Bacillales</taxon>
        <taxon>Staphylococcaceae</taxon>
        <taxon>Staphylococcus</taxon>
    </lineage>
</organism>
<gene>
    <name evidence="1" type="primary">codY</name>
    <name type="ordered locus">SaurJH9_1315</name>
</gene>
<feature type="chain" id="PRO_1000082589" description="Global transcriptional regulator CodY">
    <location>
        <begin position="1"/>
        <end position="257"/>
    </location>
</feature>
<feature type="DNA-binding region" description="H-T-H motif" evidence="1">
    <location>
        <begin position="203"/>
        <end position="222"/>
    </location>
</feature>
<feature type="region of interest" description="GAF domain" evidence="1">
    <location>
        <begin position="1"/>
        <end position="155"/>
    </location>
</feature>
<keyword id="KW-0963">Cytoplasm</keyword>
<keyword id="KW-0238">DNA-binding</keyword>
<keyword id="KW-0678">Repressor</keyword>
<keyword id="KW-0804">Transcription</keyword>
<keyword id="KW-0805">Transcription regulation</keyword>
<proteinExistence type="inferred from homology"/>
<name>CODY_STAA9</name>